<feature type="chain" id="PRO_0000221399" description="Ribosome-inactivating protein">
    <location>
        <begin position="1"/>
        <end position="20" status="greater than"/>
    </location>
</feature>
<feature type="region of interest" description="Disordered" evidence="1">
    <location>
        <begin position="1"/>
        <end position="20"/>
    </location>
</feature>
<feature type="compositionally biased region" description="Polar residues" evidence="1">
    <location>
        <begin position="8"/>
        <end position="20"/>
    </location>
</feature>
<feature type="non-terminal residue">
    <location>
        <position position="20"/>
    </location>
</feature>
<comment type="catalytic activity">
    <reaction>
        <text>Endohydrolysis of the N-glycosidic bond at one specific adenosine on the 28S rRNA.</text>
        <dbReference type="EC" id="3.2.2.22"/>
    </reaction>
</comment>
<comment type="similarity">
    <text evidence="2">Belongs to the ribosome-inactivating protein family. Type 1 RIP subfamily.</text>
</comment>
<reference key="1">
    <citation type="journal article" date="1996" name="Eur. J. Biochem.">
        <title>Purification, characterization and subcellular localization of a type-1 ribosome-inactivating protein from the sarcocarp of Cucurbita pepo.</title>
        <authorList>
            <person name="Yoshinari S."/>
            <person name="Yokota S."/>
            <person name="Sawmoto H."/>
            <person name="Koresawa S."/>
            <person name="Tamura M."/>
            <person name="Endo Y."/>
        </authorList>
    </citation>
    <scope>PROTEIN SEQUENCE</scope>
    <source>
        <tissue>Mesocarp</tissue>
    </source>
</reference>
<proteinExistence type="evidence at protein level"/>
<evidence type="ECO:0000256" key="1">
    <source>
        <dbReference type="SAM" id="MobiDB-lite"/>
    </source>
</evidence>
<evidence type="ECO:0000305" key="2"/>
<sequence length="20" mass="2235">NVRFDLSGATSSSYKTFIKN</sequence>
<protein>
    <recommendedName>
        <fullName>Ribosome-inactivating protein</fullName>
        <ecNumber>3.2.2.22</ecNumber>
    </recommendedName>
    <alternativeName>
        <fullName>rRNA N-glycosidase</fullName>
    </alternativeName>
</protein>
<accession>P80750</accession>
<name>RIPX_CUCPE</name>
<organism>
    <name type="scientific">Cucurbita pepo</name>
    <name type="common">Vegetable marrow</name>
    <name type="synonym">Summer squash</name>
    <dbReference type="NCBI Taxonomy" id="3663"/>
    <lineage>
        <taxon>Eukaryota</taxon>
        <taxon>Viridiplantae</taxon>
        <taxon>Streptophyta</taxon>
        <taxon>Embryophyta</taxon>
        <taxon>Tracheophyta</taxon>
        <taxon>Spermatophyta</taxon>
        <taxon>Magnoliopsida</taxon>
        <taxon>eudicotyledons</taxon>
        <taxon>Gunneridae</taxon>
        <taxon>Pentapetalae</taxon>
        <taxon>rosids</taxon>
        <taxon>fabids</taxon>
        <taxon>Cucurbitales</taxon>
        <taxon>Cucurbitaceae</taxon>
        <taxon>Cucurbiteae</taxon>
        <taxon>Cucurbita</taxon>
    </lineage>
</organism>
<keyword id="KW-0903">Direct protein sequencing</keyword>
<keyword id="KW-0378">Hydrolase</keyword>
<keyword id="KW-0611">Plant defense</keyword>
<keyword id="KW-0652">Protein synthesis inhibitor</keyword>
<keyword id="KW-0800">Toxin</keyword>
<dbReference type="EC" id="3.2.2.22"/>
<dbReference type="GO" id="GO:0030598">
    <property type="term" value="F:rRNA N-glycosylase activity"/>
    <property type="evidence" value="ECO:0007669"/>
    <property type="project" value="UniProtKB-EC"/>
</dbReference>
<dbReference type="GO" id="GO:0090729">
    <property type="term" value="F:toxin activity"/>
    <property type="evidence" value="ECO:0007669"/>
    <property type="project" value="UniProtKB-KW"/>
</dbReference>
<dbReference type="GO" id="GO:0006952">
    <property type="term" value="P:defense response"/>
    <property type="evidence" value="ECO:0007669"/>
    <property type="project" value="UniProtKB-KW"/>
</dbReference>
<dbReference type="GO" id="GO:0017148">
    <property type="term" value="P:negative regulation of translation"/>
    <property type="evidence" value="ECO:0007669"/>
    <property type="project" value="UniProtKB-KW"/>
</dbReference>